<feature type="chain" id="PRO_0000122506" description="Glucosylglycerol-phosphate synthase">
    <location>
        <begin position="1"/>
        <end position="499"/>
    </location>
</feature>
<accession>P74258</accession>
<proteinExistence type="evidence at protein level"/>
<comment type="function">
    <text evidence="2">Involved in salt tolerance by producing GG-phosphate from ADP-glucose and glycerol-3-phosphate (G3P), an intermediate in the synthesis of the osmolyte glucosylglycerol (GG).</text>
</comment>
<comment type="catalytic activity">
    <reaction evidence="2">
        <text>ADP-alpha-D-glucose + sn-glycerol 3-phosphate = 2-O-(alpha-D-glucopyranosyl)-sn-glycerol 3-phosphate + ADP + H(+)</text>
        <dbReference type="Rhea" id="RHEA:12881"/>
        <dbReference type="ChEBI" id="CHEBI:15378"/>
        <dbReference type="ChEBI" id="CHEBI:57498"/>
        <dbReference type="ChEBI" id="CHEBI:57597"/>
        <dbReference type="ChEBI" id="CHEBI:87089"/>
        <dbReference type="ChEBI" id="CHEBI:456216"/>
        <dbReference type="EC" id="2.4.1.213"/>
    </reaction>
</comment>
<comment type="pathway">
    <text>Glycan metabolism; glucosylglycerol biosynthesis.</text>
</comment>
<comment type="subunit">
    <text evidence="3">Interacts with GGP-P.</text>
</comment>
<comment type="subcellular location">
    <subcellularLocation>
        <location evidence="1">Cytoplasm</location>
    </subcellularLocation>
</comment>
<comment type="PTM">
    <text>Seems to be degraded, at least in vitro, by FtsH2. In an ftsH2 disruption strain inactive GGPS accumulates.</text>
</comment>
<comment type="similarity">
    <text evidence="3">Belongs to the glycosyltransferase 20 family.</text>
</comment>
<reference key="1">
    <citation type="journal article" date="1996" name="DNA Res.">
        <title>Sequence analysis of the genome of the unicellular cyanobacterium Synechocystis sp. strain PCC6803. II. Sequence determination of the entire genome and assignment of potential protein-coding regions.</title>
        <authorList>
            <person name="Kaneko T."/>
            <person name="Sato S."/>
            <person name="Kotani H."/>
            <person name="Tanaka A."/>
            <person name="Asamizu E."/>
            <person name="Nakamura Y."/>
            <person name="Miyajima N."/>
            <person name="Hirosawa M."/>
            <person name="Sugiura M."/>
            <person name="Sasamoto S."/>
            <person name="Kimura T."/>
            <person name="Hosouchi T."/>
            <person name="Matsuno A."/>
            <person name="Muraki A."/>
            <person name="Nakazaki N."/>
            <person name="Naruo K."/>
            <person name="Okumura S."/>
            <person name="Shimpo S."/>
            <person name="Takeuchi C."/>
            <person name="Wada T."/>
            <person name="Watanabe A."/>
            <person name="Yamada M."/>
            <person name="Yasuda M."/>
            <person name="Tabata S."/>
        </authorList>
    </citation>
    <scope>NUCLEOTIDE SEQUENCE [LARGE SCALE GENOMIC DNA]</scope>
    <source>
        <strain>ATCC 27184 / PCC 6803 / Kazusa</strain>
    </source>
</reference>
<reference key="2">
    <citation type="journal article" date="1998" name="J. Bacteriol.">
        <title>The ggpS gene from Synechocystis sp. strain PCC 6803 encoding glucosyl-glycerol-phosphate synthase is involved in osmolyte synthesis.</title>
        <authorList>
            <person name="Marin K."/>
            <person name="Zuther E."/>
            <person name="Kerstan T."/>
            <person name="Kunert A."/>
            <person name="Hagemann M."/>
        </authorList>
    </citation>
    <scope>FUNCTION</scope>
    <scope>CATALYTIC ACTIVITY</scope>
    <scope>CHARACTERIZATION</scope>
</reference>
<reference key="3">
    <citation type="journal article" date="2007" name="Mol. Microbiol.">
        <title>A membrane-bound FtsH protease is involved in osmoregulation in Synechocystis sp. PCC 6803: the compatible solute synthesizing enzyme GgpS is one of the targets for proteolysis.</title>
        <authorList>
            <person name="Stirnberg M."/>
            <person name="Fulda S."/>
            <person name="Huckauf J."/>
            <person name="Hagemann M."/>
            <person name="Kramer R."/>
            <person name="Marin K."/>
        </authorList>
    </citation>
    <scope>SUBCELLULAR LOCATION</scope>
    <scope>DEGRADATION BY FTSH2</scope>
    <scope>POSSIBLE INTERACTION WITH GGP-P</scope>
</reference>
<sequence>MNSSLVILYHREPYDEVRENGKTVYREKKSPNGILPTLKSFFADAEQSTWVAWKQVSPKQKDDFQADMSIEGLGDRCTVRRVPLTAEQVKNFYHITSKEAFWPILHSFPWQFTYDSSDWDNFQHINRLFAEAACADADDNALFWVHDYNLWLAPLYIRQLKPNAKIAFFHHTPFPSVDIFNILPWREAIVESLLACDLCGFHIPRYVENFVAVARSLKPVEITRRVVVDQAFTPYGTALAEPELTTQLRYGDRLINLDAFPVGTNPANIRAIVAKESVQQKVAEIKQDLGGKRLIVSAGRVDYVKGTKEMLMCYERLLERRPELQGEISLVVPVAKAAEGMRIYRNAQNEIERLAGKINGRFAKLSWTPVMLFTSPLAYEELIALFCAADIAWITPLRDGLNLVAKEYVVAKNGEEGVLILSEFAGCAVELPDAVLTNPYASSRMDESIDQALAMDKDEQKKRMGRMYAAIKRYDVQQWANHLLREAYADVVLGEPPQM</sequence>
<gene>
    <name type="primary">ggpS</name>
    <name type="ordered locus">sll1566</name>
</gene>
<organism>
    <name type="scientific">Synechocystis sp. (strain ATCC 27184 / PCC 6803 / Kazusa)</name>
    <dbReference type="NCBI Taxonomy" id="1111708"/>
    <lineage>
        <taxon>Bacteria</taxon>
        <taxon>Bacillati</taxon>
        <taxon>Cyanobacteriota</taxon>
        <taxon>Cyanophyceae</taxon>
        <taxon>Synechococcales</taxon>
        <taxon>Merismopediaceae</taxon>
        <taxon>Synechocystis</taxon>
    </lineage>
</organism>
<name>GGPS_SYNY3</name>
<evidence type="ECO:0000269" key="1">
    <source>
    </source>
</evidence>
<evidence type="ECO:0000269" key="2">
    <source>
    </source>
</evidence>
<evidence type="ECO:0000305" key="3"/>
<keyword id="KW-0963">Cytoplasm</keyword>
<keyword id="KW-0328">Glycosyltransferase</keyword>
<keyword id="KW-1185">Reference proteome</keyword>
<keyword id="KW-0808">Transferase</keyword>
<dbReference type="EC" id="2.4.1.213" evidence="2"/>
<dbReference type="EMBL" id="BA000022">
    <property type="protein sequence ID" value="BAA18352.1"/>
    <property type="molecule type" value="Genomic_DNA"/>
</dbReference>
<dbReference type="PIR" id="S75893">
    <property type="entry name" value="S75893"/>
</dbReference>
<dbReference type="SMR" id="P74258"/>
<dbReference type="IntAct" id="P74258">
    <property type="interactions" value="1"/>
</dbReference>
<dbReference type="STRING" id="1148.gene:10499228"/>
<dbReference type="CAZy" id="GT20">
    <property type="family name" value="Glycosyltransferase Family 20"/>
</dbReference>
<dbReference type="PaxDb" id="1148-1653438"/>
<dbReference type="EnsemblBacteria" id="BAA18352">
    <property type="protein sequence ID" value="BAA18352"/>
    <property type="gene ID" value="BAA18352"/>
</dbReference>
<dbReference type="KEGG" id="syn:sll1566"/>
<dbReference type="eggNOG" id="COG0380">
    <property type="taxonomic scope" value="Bacteria"/>
</dbReference>
<dbReference type="InParanoid" id="P74258"/>
<dbReference type="PhylomeDB" id="P74258"/>
<dbReference type="BioCyc" id="MetaCyc:MONOMER-20259"/>
<dbReference type="BRENDA" id="2.4.1.213">
    <property type="organism ID" value="6192"/>
</dbReference>
<dbReference type="UniPathway" id="UPA00795"/>
<dbReference type="Proteomes" id="UP000001425">
    <property type="component" value="Chromosome"/>
</dbReference>
<dbReference type="GO" id="GO:0005737">
    <property type="term" value="C:cytoplasm"/>
    <property type="evidence" value="ECO:0007669"/>
    <property type="project" value="UniProtKB-SubCell"/>
</dbReference>
<dbReference type="GO" id="GO:0033828">
    <property type="term" value="F:glucosylglycerol-phosphate synthase activity"/>
    <property type="evidence" value="ECO:0007669"/>
    <property type="project" value="UniProtKB-EC"/>
</dbReference>
<dbReference type="GO" id="GO:0051473">
    <property type="term" value="P:glucosylglycerol biosynthetic process"/>
    <property type="evidence" value="ECO:0007669"/>
    <property type="project" value="UniProtKB-UniPathway"/>
</dbReference>
<dbReference type="GO" id="GO:0005992">
    <property type="term" value="P:trehalose biosynthetic process"/>
    <property type="evidence" value="ECO:0000318"/>
    <property type="project" value="GO_Central"/>
</dbReference>
<dbReference type="CDD" id="cd03788">
    <property type="entry name" value="GT20_TPS"/>
    <property type="match status" value="1"/>
</dbReference>
<dbReference type="FunFam" id="3.40.50.2000:FF:000010">
    <property type="entry name" value="Alpha,alpha-trehalose-phosphate synthase"/>
    <property type="match status" value="1"/>
</dbReference>
<dbReference type="Gene3D" id="3.40.50.2000">
    <property type="entry name" value="Glycogen Phosphorylase B"/>
    <property type="match status" value="2"/>
</dbReference>
<dbReference type="InterPro" id="IPR012764">
    <property type="entry name" value="Gluc_glyc_Psyn"/>
</dbReference>
<dbReference type="InterPro" id="IPR001830">
    <property type="entry name" value="Glyco_trans_20"/>
</dbReference>
<dbReference type="NCBIfam" id="TIGR02398">
    <property type="entry name" value="gluc_glyc_Psyn"/>
    <property type="match status" value="1"/>
</dbReference>
<dbReference type="PANTHER" id="PTHR10788:SF106">
    <property type="entry name" value="BCDNA.GH08860"/>
    <property type="match status" value="1"/>
</dbReference>
<dbReference type="PANTHER" id="PTHR10788">
    <property type="entry name" value="TREHALOSE-6-PHOSPHATE SYNTHASE"/>
    <property type="match status" value="1"/>
</dbReference>
<dbReference type="Pfam" id="PF00982">
    <property type="entry name" value="Glyco_transf_20"/>
    <property type="match status" value="1"/>
</dbReference>
<dbReference type="SUPFAM" id="SSF53756">
    <property type="entry name" value="UDP-Glycosyltransferase/glycogen phosphorylase"/>
    <property type="match status" value="1"/>
</dbReference>
<protein>
    <recommendedName>
        <fullName>Glucosylglycerol-phosphate synthase</fullName>
        <ecNumber evidence="2">2.4.1.213</ecNumber>
    </recommendedName>
    <alternativeName>
        <fullName>Glucosyl-glycerol-phosphate synthase</fullName>
        <shortName>GG-phosphate synthase</shortName>
        <shortName>GGPS</shortName>
    </alternativeName>
</protein>